<name>LMAN2_MOUSE</name>
<accession>Q9DBH5</accession>
<accession>Q8BJL4</accession>
<accession>Q9CXG7</accession>
<sequence length="358" mass="40430">MAAEAWLWRWGWGWGQRCPGRPGLPGPGPSPTTFLHLLLLLGPVAADITDGNSEHLKREHSLIKPYQGVGSSSMPLWDFQGSTMLTSQYVRLTPDERSKEGSIWNHQPCFLKDWEMHVHFKVHGTGKKNLHGDGIALWYTRDRLVPGPVFGSKDNFHGLAIFLDTYPNDETTERVFPYISVMVNNGSLSYDHSKDGRWSELAGCTADFRNRDHDTFLAVRYSRGRLTVMTDLEDKNEWKNCIDITGVRLPTGYYFGASAGTGDLSDNHDIISIKLFQLTVERTPEEESIDWTKIEPGVNFLKSPKDNVDDPTGNFRNGPLTGWRVFLLLLCALLGVVVCAVVGAVVFQKRQERNKRFY</sequence>
<dbReference type="EMBL" id="AK004952">
    <property type="protein sequence ID" value="BAB23695.1"/>
    <property type="molecule type" value="mRNA"/>
</dbReference>
<dbReference type="EMBL" id="AK014384">
    <property type="protein sequence ID" value="BAB29313.1"/>
    <property type="molecule type" value="mRNA"/>
</dbReference>
<dbReference type="EMBL" id="AK083442">
    <property type="protein sequence ID" value="BAC38916.1"/>
    <property type="molecule type" value="mRNA"/>
</dbReference>
<dbReference type="EMBL" id="AK150383">
    <property type="protein sequence ID" value="BAE29514.1"/>
    <property type="molecule type" value="mRNA"/>
</dbReference>
<dbReference type="EMBL" id="AK166953">
    <property type="protein sequence ID" value="BAE39136.1"/>
    <property type="molecule type" value="mRNA"/>
</dbReference>
<dbReference type="EMBL" id="AK169401">
    <property type="protein sequence ID" value="BAE41147.1"/>
    <property type="molecule type" value="mRNA"/>
</dbReference>
<dbReference type="EMBL" id="CH466546">
    <property type="protein sequence ID" value="EDL41187.1"/>
    <property type="molecule type" value="Genomic_DNA"/>
</dbReference>
<dbReference type="EMBL" id="BC049221">
    <property type="protein sequence ID" value="AAH49221.1"/>
    <property type="molecule type" value="mRNA"/>
</dbReference>
<dbReference type="EMBL" id="BC055327">
    <property type="protein sequence ID" value="AAH55327.1"/>
    <property type="molecule type" value="mRNA"/>
</dbReference>
<dbReference type="CCDS" id="CCDS26544.1"/>
<dbReference type="RefSeq" id="NP_080104.2">
    <property type="nucleotide sequence ID" value="NM_025828.3"/>
</dbReference>
<dbReference type="SMR" id="Q9DBH5"/>
<dbReference type="BioGRID" id="211791">
    <property type="interactions" value="5"/>
</dbReference>
<dbReference type="FunCoup" id="Q9DBH5">
    <property type="interactions" value="2823"/>
</dbReference>
<dbReference type="IntAct" id="Q9DBH5">
    <property type="interactions" value="3"/>
</dbReference>
<dbReference type="MINT" id="Q9DBH5"/>
<dbReference type="STRING" id="10090.ENSMUSP00000021940"/>
<dbReference type="GlyConnect" id="2819">
    <property type="glycosylation" value="5 N-Linked glycans (1 site)"/>
</dbReference>
<dbReference type="GlyCosmos" id="Q9DBH5">
    <property type="glycosylation" value="1 site, 5 glycans"/>
</dbReference>
<dbReference type="GlyGen" id="Q9DBH5">
    <property type="glycosylation" value="2 sites, 6 N-linked glycans (1 site), 1 O-linked glycan (1 site)"/>
</dbReference>
<dbReference type="iPTMnet" id="Q9DBH5"/>
<dbReference type="PhosphoSitePlus" id="Q9DBH5"/>
<dbReference type="SwissPalm" id="Q9DBH5"/>
<dbReference type="CPTAC" id="non-CPTAC-3656"/>
<dbReference type="jPOST" id="Q9DBH5"/>
<dbReference type="PaxDb" id="10090-ENSMUSP00000021940"/>
<dbReference type="PeptideAtlas" id="Q9DBH5"/>
<dbReference type="ProteomicsDB" id="292269"/>
<dbReference type="Pumba" id="Q9DBH5"/>
<dbReference type="TopDownProteomics" id="Q9DBH5"/>
<dbReference type="Antibodypedia" id="1119">
    <property type="antibodies" value="159 antibodies from 24 providers"/>
</dbReference>
<dbReference type="DNASU" id="66890"/>
<dbReference type="Ensembl" id="ENSMUST00000021940.8">
    <property type="protein sequence ID" value="ENSMUSP00000021940.8"/>
    <property type="gene ID" value="ENSMUSG00000021484.9"/>
</dbReference>
<dbReference type="GeneID" id="66890"/>
<dbReference type="KEGG" id="mmu:66890"/>
<dbReference type="UCSC" id="uc007qqo.1">
    <property type="organism name" value="mouse"/>
</dbReference>
<dbReference type="AGR" id="MGI:1914140"/>
<dbReference type="CTD" id="10960"/>
<dbReference type="MGI" id="MGI:1914140">
    <property type="gene designation" value="Lman2"/>
</dbReference>
<dbReference type="VEuPathDB" id="HostDB:ENSMUSG00000021484"/>
<dbReference type="eggNOG" id="KOG3839">
    <property type="taxonomic scope" value="Eukaryota"/>
</dbReference>
<dbReference type="GeneTree" id="ENSGT00940000158355"/>
<dbReference type="HOGENOM" id="CLU_041093_0_0_1"/>
<dbReference type="InParanoid" id="Q9DBH5"/>
<dbReference type="OMA" id="GCTADIR"/>
<dbReference type="OrthoDB" id="270293at2759"/>
<dbReference type="PhylomeDB" id="Q9DBH5"/>
<dbReference type="TreeFam" id="TF313311"/>
<dbReference type="Reactome" id="R-MMU-204005">
    <property type="pathway name" value="COPII-mediated vesicle transport"/>
</dbReference>
<dbReference type="Reactome" id="R-MMU-5694530">
    <property type="pathway name" value="Cargo concentration in the ER"/>
</dbReference>
<dbReference type="BioGRID-ORCS" id="66890">
    <property type="hits" value="3 hits in 79 CRISPR screens"/>
</dbReference>
<dbReference type="ChiTaRS" id="Lman2">
    <property type="organism name" value="mouse"/>
</dbReference>
<dbReference type="PRO" id="PR:Q9DBH5"/>
<dbReference type="Proteomes" id="UP000000589">
    <property type="component" value="Chromosome 13"/>
</dbReference>
<dbReference type="RNAct" id="Q9DBH5">
    <property type="molecule type" value="protein"/>
</dbReference>
<dbReference type="Bgee" id="ENSMUSG00000021484">
    <property type="expression patterns" value="Expressed in ectoplacental cone and 264 other cell types or tissues"/>
</dbReference>
<dbReference type="GO" id="GO:0009986">
    <property type="term" value="C:cell surface"/>
    <property type="evidence" value="ECO:0007669"/>
    <property type="project" value="Ensembl"/>
</dbReference>
<dbReference type="GO" id="GO:0005793">
    <property type="term" value="C:endoplasmic reticulum-Golgi intermediate compartment"/>
    <property type="evidence" value="ECO:0007669"/>
    <property type="project" value="Ensembl"/>
</dbReference>
<dbReference type="GO" id="GO:0005615">
    <property type="term" value="C:extracellular space"/>
    <property type="evidence" value="ECO:0007669"/>
    <property type="project" value="Ensembl"/>
</dbReference>
<dbReference type="GO" id="GO:0000139">
    <property type="term" value="C:Golgi membrane"/>
    <property type="evidence" value="ECO:0007669"/>
    <property type="project" value="UniProtKB-SubCell"/>
</dbReference>
<dbReference type="GO" id="GO:0005886">
    <property type="term" value="C:plasma membrane"/>
    <property type="evidence" value="ECO:0007669"/>
    <property type="project" value="Ensembl"/>
</dbReference>
<dbReference type="GO" id="GO:0005537">
    <property type="term" value="F:D-mannose binding"/>
    <property type="evidence" value="ECO:0007669"/>
    <property type="project" value="Ensembl"/>
</dbReference>
<dbReference type="GO" id="GO:0031072">
    <property type="term" value="F:heat shock protein binding"/>
    <property type="evidence" value="ECO:0007669"/>
    <property type="project" value="Ensembl"/>
</dbReference>
<dbReference type="GO" id="GO:0046872">
    <property type="term" value="F:metal ion binding"/>
    <property type="evidence" value="ECO:0007669"/>
    <property type="project" value="UniProtKB-KW"/>
</dbReference>
<dbReference type="GO" id="GO:0050766">
    <property type="term" value="P:positive regulation of phagocytosis"/>
    <property type="evidence" value="ECO:0000315"/>
    <property type="project" value="UniProtKB"/>
</dbReference>
<dbReference type="GO" id="GO:0015031">
    <property type="term" value="P:protein transport"/>
    <property type="evidence" value="ECO:0007669"/>
    <property type="project" value="UniProtKB-KW"/>
</dbReference>
<dbReference type="GO" id="GO:0006890">
    <property type="term" value="P:retrograde vesicle-mediated transport, Golgi to endoplasmic reticulum"/>
    <property type="evidence" value="ECO:0007669"/>
    <property type="project" value="Ensembl"/>
</dbReference>
<dbReference type="CDD" id="cd06901">
    <property type="entry name" value="lectin_VIP36_VIPL"/>
    <property type="match status" value="1"/>
</dbReference>
<dbReference type="FunFam" id="2.60.120.200:FF:000017">
    <property type="entry name" value="Vesicular integral-membrane protein VIP36"/>
    <property type="match status" value="1"/>
</dbReference>
<dbReference type="Gene3D" id="2.60.120.200">
    <property type="match status" value="1"/>
</dbReference>
<dbReference type="InterPro" id="IPR013320">
    <property type="entry name" value="ConA-like_dom_sf"/>
</dbReference>
<dbReference type="InterPro" id="IPR051136">
    <property type="entry name" value="Intracellular_Lectin-GPT"/>
</dbReference>
<dbReference type="InterPro" id="IPR005052">
    <property type="entry name" value="Lectin_leg"/>
</dbReference>
<dbReference type="InterPro" id="IPR035664">
    <property type="entry name" value="VIP36_lectin"/>
</dbReference>
<dbReference type="PANTHER" id="PTHR12223:SF36">
    <property type="entry name" value="VESICULAR INTEGRAL-MEMBRANE PROTEIN VIP36"/>
    <property type="match status" value="1"/>
</dbReference>
<dbReference type="PANTHER" id="PTHR12223">
    <property type="entry name" value="VESICULAR MANNOSE-BINDING LECTIN"/>
    <property type="match status" value="1"/>
</dbReference>
<dbReference type="Pfam" id="PF03388">
    <property type="entry name" value="Lectin_leg-like"/>
    <property type="match status" value="1"/>
</dbReference>
<dbReference type="SUPFAM" id="SSF49899">
    <property type="entry name" value="Concanavalin A-like lectins/glucanases"/>
    <property type="match status" value="1"/>
</dbReference>
<dbReference type="PROSITE" id="PS51328">
    <property type="entry name" value="L_LECTIN_LIKE"/>
    <property type="match status" value="1"/>
</dbReference>
<proteinExistence type="evidence at protein level"/>
<protein>
    <recommendedName>
        <fullName>Vesicular integral-membrane protein VIP36</fullName>
    </recommendedName>
    <alternativeName>
        <fullName>Lectin mannose-binding 2</fullName>
    </alternativeName>
    <alternativeName>
        <fullName>Vesicular integral-membrane protein 36</fullName>
        <shortName>VIP36</shortName>
    </alternativeName>
</protein>
<reference key="1">
    <citation type="journal article" date="2005" name="Science">
        <title>The transcriptional landscape of the mammalian genome.</title>
        <authorList>
            <person name="Carninci P."/>
            <person name="Kasukawa T."/>
            <person name="Katayama S."/>
            <person name="Gough J."/>
            <person name="Frith M.C."/>
            <person name="Maeda N."/>
            <person name="Oyama R."/>
            <person name="Ravasi T."/>
            <person name="Lenhard B."/>
            <person name="Wells C."/>
            <person name="Kodzius R."/>
            <person name="Shimokawa K."/>
            <person name="Bajic V.B."/>
            <person name="Brenner S.E."/>
            <person name="Batalov S."/>
            <person name="Forrest A.R."/>
            <person name="Zavolan M."/>
            <person name="Davis M.J."/>
            <person name="Wilming L.G."/>
            <person name="Aidinis V."/>
            <person name="Allen J.E."/>
            <person name="Ambesi-Impiombato A."/>
            <person name="Apweiler R."/>
            <person name="Aturaliya R.N."/>
            <person name="Bailey T.L."/>
            <person name="Bansal M."/>
            <person name="Baxter L."/>
            <person name="Beisel K.W."/>
            <person name="Bersano T."/>
            <person name="Bono H."/>
            <person name="Chalk A.M."/>
            <person name="Chiu K.P."/>
            <person name="Choudhary V."/>
            <person name="Christoffels A."/>
            <person name="Clutterbuck D.R."/>
            <person name="Crowe M.L."/>
            <person name="Dalla E."/>
            <person name="Dalrymple B.P."/>
            <person name="de Bono B."/>
            <person name="Della Gatta G."/>
            <person name="di Bernardo D."/>
            <person name="Down T."/>
            <person name="Engstrom P."/>
            <person name="Fagiolini M."/>
            <person name="Faulkner G."/>
            <person name="Fletcher C.F."/>
            <person name="Fukushima T."/>
            <person name="Furuno M."/>
            <person name="Futaki S."/>
            <person name="Gariboldi M."/>
            <person name="Georgii-Hemming P."/>
            <person name="Gingeras T.R."/>
            <person name="Gojobori T."/>
            <person name="Green R.E."/>
            <person name="Gustincich S."/>
            <person name="Harbers M."/>
            <person name="Hayashi Y."/>
            <person name="Hensch T.K."/>
            <person name="Hirokawa N."/>
            <person name="Hill D."/>
            <person name="Huminiecki L."/>
            <person name="Iacono M."/>
            <person name="Ikeo K."/>
            <person name="Iwama A."/>
            <person name="Ishikawa T."/>
            <person name="Jakt M."/>
            <person name="Kanapin A."/>
            <person name="Katoh M."/>
            <person name="Kawasawa Y."/>
            <person name="Kelso J."/>
            <person name="Kitamura H."/>
            <person name="Kitano H."/>
            <person name="Kollias G."/>
            <person name="Krishnan S.P."/>
            <person name="Kruger A."/>
            <person name="Kummerfeld S.K."/>
            <person name="Kurochkin I.V."/>
            <person name="Lareau L.F."/>
            <person name="Lazarevic D."/>
            <person name="Lipovich L."/>
            <person name="Liu J."/>
            <person name="Liuni S."/>
            <person name="McWilliam S."/>
            <person name="Madan Babu M."/>
            <person name="Madera M."/>
            <person name="Marchionni L."/>
            <person name="Matsuda H."/>
            <person name="Matsuzawa S."/>
            <person name="Miki H."/>
            <person name="Mignone F."/>
            <person name="Miyake S."/>
            <person name="Morris K."/>
            <person name="Mottagui-Tabar S."/>
            <person name="Mulder N."/>
            <person name="Nakano N."/>
            <person name="Nakauchi H."/>
            <person name="Ng P."/>
            <person name="Nilsson R."/>
            <person name="Nishiguchi S."/>
            <person name="Nishikawa S."/>
            <person name="Nori F."/>
            <person name="Ohara O."/>
            <person name="Okazaki Y."/>
            <person name="Orlando V."/>
            <person name="Pang K.C."/>
            <person name="Pavan W.J."/>
            <person name="Pavesi G."/>
            <person name="Pesole G."/>
            <person name="Petrovsky N."/>
            <person name="Piazza S."/>
            <person name="Reed J."/>
            <person name="Reid J.F."/>
            <person name="Ring B.Z."/>
            <person name="Ringwald M."/>
            <person name="Rost B."/>
            <person name="Ruan Y."/>
            <person name="Salzberg S.L."/>
            <person name="Sandelin A."/>
            <person name="Schneider C."/>
            <person name="Schoenbach C."/>
            <person name="Sekiguchi K."/>
            <person name="Semple C.A."/>
            <person name="Seno S."/>
            <person name="Sessa L."/>
            <person name="Sheng Y."/>
            <person name="Shibata Y."/>
            <person name="Shimada H."/>
            <person name="Shimada K."/>
            <person name="Silva D."/>
            <person name="Sinclair B."/>
            <person name="Sperling S."/>
            <person name="Stupka E."/>
            <person name="Sugiura K."/>
            <person name="Sultana R."/>
            <person name="Takenaka Y."/>
            <person name="Taki K."/>
            <person name="Tammoja K."/>
            <person name="Tan S.L."/>
            <person name="Tang S."/>
            <person name="Taylor M.S."/>
            <person name="Tegner J."/>
            <person name="Teichmann S.A."/>
            <person name="Ueda H.R."/>
            <person name="van Nimwegen E."/>
            <person name="Verardo R."/>
            <person name="Wei C.L."/>
            <person name="Yagi K."/>
            <person name="Yamanishi H."/>
            <person name="Zabarovsky E."/>
            <person name="Zhu S."/>
            <person name="Zimmer A."/>
            <person name="Hide W."/>
            <person name="Bult C."/>
            <person name="Grimmond S.M."/>
            <person name="Teasdale R.D."/>
            <person name="Liu E.T."/>
            <person name="Brusic V."/>
            <person name="Quackenbush J."/>
            <person name="Wahlestedt C."/>
            <person name="Mattick J.S."/>
            <person name="Hume D.A."/>
            <person name="Kai C."/>
            <person name="Sasaki D."/>
            <person name="Tomaru Y."/>
            <person name="Fukuda S."/>
            <person name="Kanamori-Katayama M."/>
            <person name="Suzuki M."/>
            <person name="Aoki J."/>
            <person name="Arakawa T."/>
            <person name="Iida J."/>
            <person name="Imamura K."/>
            <person name="Itoh M."/>
            <person name="Kato T."/>
            <person name="Kawaji H."/>
            <person name="Kawagashira N."/>
            <person name="Kawashima T."/>
            <person name="Kojima M."/>
            <person name="Kondo S."/>
            <person name="Konno H."/>
            <person name="Nakano K."/>
            <person name="Ninomiya N."/>
            <person name="Nishio T."/>
            <person name="Okada M."/>
            <person name="Plessy C."/>
            <person name="Shibata K."/>
            <person name="Shiraki T."/>
            <person name="Suzuki S."/>
            <person name="Tagami M."/>
            <person name="Waki K."/>
            <person name="Watahiki A."/>
            <person name="Okamura-Oho Y."/>
            <person name="Suzuki H."/>
            <person name="Kawai J."/>
            <person name="Hayashizaki Y."/>
        </authorList>
    </citation>
    <scope>NUCLEOTIDE SEQUENCE [LARGE SCALE MRNA]</scope>
    <source>
        <strain>C57BL/6J</strain>
        <tissue>Bone marrow</tissue>
        <tissue>Embryonic head</tissue>
        <tissue>Kidney</tissue>
        <tissue>Liver</tissue>
    </source>
</reference>
<reference key="2">
    <citation type="submission" date="2005-07" db="EMBL/GenBank/DDBJ databases">
        <authorList>
            <person name="Mural R.J."/>
            <person name="Adams M.D."/>
            <person name="Myers E.W."/>
            <person name="Smith H.O."/>
            <person name="Venter J.C."/>
        </authorList>
    </citation>
    <scope>NUCLEOTIDE SEQUENCE [LARGE SCALE GENOMIC DNA]</scope>
</reference>
<reference key="3">
    <citation type="journal article" date="2004" name="Genome Res.">
        <title>The status, quality, and expansion of the NIH full-length cDNA project: the Mammalian Gene Collection (MGC).</title>
        <authorList>
            <consortium name="The MGC Project Team"/>
        </authorList>
    </citation>
    <scope>NUCLEOTIDE SEQUENCE [LARGE SCALE MRNA]</scope>
    <source>
        <strain>C57BL/6J</strain>
        <strain>FVB/N</strain>
        <tissue>Brain</tissue>
        <tissue>Mammary tumor</tissue>
    </source>
</reference>
<reference key="4">
    <citation type="journal article" date="2010" name="Cell">
        <title>A tissue-specific atlas of mouse protein phosphorylation and expression.</title>
        <authorList>
            <person name="Huttlin E.L."/>
            <person name="Jedrychowski M.P."/>
            <person name="Elias J.E."/>
            <person name="Goswami T."/>
            <person name="Rad R."/>
            <person name="Beausoleil S.A."/>
            <person name="Villen J."/>
            <person name="Haas W."/>
            <person name="Sowa M.E."/>
            <person name="Gygi S.P."/>
        </authorList>
    </citation>
    <scope>IDENTIFICATION BY MASS SPECTROMETRY [LARGE SCALE ANALYSIS]</scope>
    <source>
        <tissue>Brain</tissue>
        <tissue>Brown adipose tissue</tissue>
        <tissue>Heart</tissue>
        <tissue>Kidney</tissue>
        <tissue>Liver</tissue>
        <tissue>Lung</tissue>
        <tissue>Pancreas</tissue>
        <tissue>Spleen</tissue>
        <tissue>Testis</tissue>
    </source>
</reference>
<feature type="signal peptide" evidence="2">
    <location>
        <begin position="1"/>
        <end position="46"/>
    </location>
</feature>
<feature type="chain" id="PRO_0000017667" description="Vesicular integral-membrane protein VIP36">
    <location>
        <begin position="47"/>
        <end position="358"/>
    </location>
</feature>
<feature type="topological domain" description="Lumenal" evidence="2">
    <location>
        <begin position="47"/>
        <end position="324"/>
    </location>
</feature>
<feature type="transmembrane region" description="Helical" evidence="2">
    <location>
        <begin position="325"/>
        <end position="347"/>
    </location>
</feature>
<feature type="topological domain" description="Cytoplasmic" evidence="2">
    <location>
        <begin position="348"/>
        <end position="358"/>
    </location>
</feature>
<feature type="domain" description="L-type lectin-like" evidence="3">
    <location>
        <begin position="54"/>
        <end position="278"/>
    </location>
</feature>
<feature type="binding site" evidence="3">
    <location>
        <position position="98"/>
    </location>
    <ligand>
        <name>a carbohydrate</name>
        <dbReference type="ChEBI" id="CHEBI:16646"/>
    </ligand>
</feature>
<feature type="binding site" evidence="3">
    <location>
        <position position="133"/>
    </location>
    <ligand>
        <name>a carbohydrate</name>
        <dbReference type="ChEBI" id="CHEBI:16646"/>
    </ligand>
</feature>
<feature type="binding site" evidence="3">
    <location>
        <position position="164"/>
    </location>
    <ligand>
        <name>Ca(2+)</name>
        <dbReference type="ChEBI" id="CHEBI:29108"/>
    </ligand>
</feature>
<feature type="binding site" evidence="3">
    <location>
        <begin position="166"/>
        <end position="168"/>
    </location>
    <ligand>
        <name>a carbohydrate</name>
        <dbReference type="ChEBI" id="CHEBI:16646"/>
    </ligand>
</feature>
<feature type="binding site" evidence="3">
    <location>
        <position position="166"/>
    </location>
    <ligand>
        <name>Ca(2+)</name>
        <dbReference type="ChEBI" id="CHEBI:29108"/>
    </ligand>
</feature>
<feature type="binding site" evidence="3">
    <location>
        <position position="168"/>
    </location>
    <ligand>
        <name>Ca(2+)</name>
        <dbReference type="ChEBI" id="CHEBI:29108"/>
    </ligand>
</feature>
<feature type="binding site" evidence="3">
    <location>
        <position position="192"/>
    </location>
    <ligand>
        <name>a carbohydrate</name>
        <dbReference type="ChEBI" id="CHEBI:16646"/>
    </ligand>
</feature>
<feature type="binding site" evidence="3">
    <location>
        <position position="195"/>
    </location>
    <ligand>
        <name>Ca(2+)</name>
        <dbReference type="ChEBI" id="CHEBI:29108"/>
    </ligand>
</feature>
<feature type="binding site" evidence="3">
    <location>
        <begin position="262"/>
        <end position="264"/>
    </location>
    <ligand>
        <name>a carbohydrate</name>
        <dbReference type="ChEBI" id="CHEBI:16646"/>
    </ligand>
</feature>
<feature type="glycosylation site" description="N-linked (GlcNAc...) asparagine" evidence="2">
    <location>
        <position position="185"/>
    </location>
</feature>
<feature type="disulfide bond" evidence="3">
    <location>
        <begin position="204"/>
        <end position="241"/>
    </location>
</feature>
<feature type="sequence conflict" description="In Ref. 1; BAB29313." evidence="4" ref="1">
    <original>V</original>
    <variation>L</variation>
    <location>
        <position position="219"/>
    </location>
</feature>
<feature type="sequence conflict" description="In Ref. 1; BAB23695." evidence="4" ref="1">
    <original>L</original>
    <variation>V</variation>
    <location>
        <position position="328"/>
    </location>
</feature>
<organism>
    <name type="scientific">Mus musculus</name>
    <name type="common">Mouse</name>
    <dbReference type="NCBI Taxonomy" id="10090"/>
    <lineage>
        <taxon>Eukaryota</taxon>
        <taxon>Metazoa</taxon>
        <taxon>Chordata</taxon>
        <taxon>Craniata</taxon>
        <taxon>Vertebrata</taxon>
        <taxon>Euteleostomi</taxon>
        <taxon>Mammalia</taxon>
        <taxon>Eutheria</taxon>
        <taxon>Euarchontoglires</taxon>
        <taxon>Glires</taxon>
        <taxon>Rodentia</taxon>
        <taxon>Myomorpha</taxon>
        <taxon>Muroidea</taxon>
        <taxon>Muridae</taxon>
        <taxon>Murinae</taxon>
        <taxon>Mus</taxon>
        <taxon>Mus</taxon>
    </lineage>
</organism>
<evidence type="ECO:0000250" key="1"/>
<evidence type="ECO:0000255" key="2"/>
<evidence type="ECO:0000255" key="3">
    <source>
        <dbReference type="PROSITE-ProRule" id="PRU00658"/>
    </source>
</evidence>
<evidence type="ECO:0000305" key="4"/>
<keyword id="KW-0106">Calcium</keyword>
<keyword id="KW-1015">Disulfide bond</keyword>
<keyword id="KW-0325">Glycoprotein</keyword>
<keyword id="KW-0333">Golgi apparatus</keyword>
<keyword id="KW-0430">Lectin</keyword>
<keyword id="KW-0472">Membrane</keyword>
<keyword id="KW-0479">Metal-binding</keyword>
<keyword id="KW-0653">Protein transport</keyword>
<keyword id="KW-1185">Reference proteome</keyword>
<keyword id="KW-0732">Signal</keyword>
<keyword id="KW-0812">Transmembrane</keyword>
<keyword id="KW-1133">Transmembrane helix</keyword>
<keyword id="KW-0813">Transport</keyword>
<gene>
    <name type="primary">Lman2</name>
</gene>
<comment type="function">
    <text evidence="1">Plays a role as an intracellular lectin in the early secretory pathway. Interacts with N-acetyl-D-galactosamine and high-mannose type glycans and may also bind to O-linked glycans. Involved in the transport and sorting of glycoproteins carrying high mannose-type glycans (By similarity).</text>
</comment>
<comment type="cofactor">
    <cofactor evidence="1">
        <name>Ca(2+)</name>
        <dbReference type="ChEBI" id="CHEBI:29108"/>
    </cofactor>
    <text evidence="1">Binds 2 calcium ions per subunit.</text>
</comment>
<comment type="subcellular location">
    <subcellularLocation>
        <location evidence="1">Golgi apparatus membrane</location>
        <topology evidence="1">Single-pass type I membrane protein</topology>
    </subcellularLocation>
</comment>